<comment type="function">
    <text evidence="2">Induces hypersensitive response (HR).</text>
</comment>
<comment type="subunit">
    <text evidence="3">Interacts (via C-terminus) with Arabidopsis WIN1, WIN2 and WIN3.</text>
</comment>
<comment type="subcellular location">
    <subcellularLocation>
        <location evidence="2">Secreted</location>
    </subcellularLocation>
    <text>Secreted via type III secretion system (T3SS).</text>
</comment>
<comment type="similarity">
    <text evidence="4">Belongs to the HopW family.</text>
</comment>
<sequence>MSPAQIIRTPHSFPPSFTGTSSSAENSHAQSPQQVLTRAFVASGELNAAFGRTSTASEQDFTSLLGTLQRELERKTLSFPDIAELANQLAEAAKGDQGGHWLGRDEQQTLKGMIDRCKSQLAHTHASDASYDPLAQVCENLKTARLHQSISQMTGEAHAKVRGVPDLLALIQLDPDVLAEKPVGMTSYVNFGSFICMAKARTAELSEDLRSDPNEVALLLHPHADTILELERLPDALAALTENCPDTPTRDDLRSLAKETGELLQQLRANDLLPRSEEVSSYQGETSVRSREVVEPKLTLCQAGGNGQGQLEASSARPESLRYAPTRAASSGSEARVPGQAVGGKIADDAQKVAGLYAEKKRTNWTQANGVAGKISHKIQSLLGMRDAGSRVQAFVAFMADGKGRPGATMLDLGDGWMRATRVIKGEAALIDFQCDSDGKVVDARHPGRFPVLPQGNEREAFKTVLQELKFRGAETLSKVPVYYVNRNTRGYVIPTHGYVVAGHPNRGRKSGAVLYGVGGDPKRGPVALDEKLLGHLVGRSDSKTSSKLSAPVKAAISALAGASFATREDFYDAYCAVRGDAVDPLERHNEISSIYRLLPLSTMEMWPKKADDYRVARPAAPERDLRAFENLPKDIGRKAQLKKVSNVDSIDLLEAKRQFTLHQLYQDEMLGRNGTGVPSADFKPKVDAQRRDQLVASTPKFQRLPPHTTDKVGNCNTGASSLLQRAVDTYTEKNNLPPEKVTAASIFGIGSSHRLAIWDPLDGSSSNKSSKDR</sequence>
<proteinExistence type="evidence at protein level"/>
<organism>
    <name type="scientific">Pseudomonas syringae pv. maculicola</name>
    <dbReference type="NCBI Taxonomy" id="59511"/>
    <lineage>
        <taxon>Bacteria</taxon>
        <taxon>Pseudomonadati</taxon>
        <taxon>Pseudomonadota</taxon>
        <taxon>Gammaproteobacteria</taxon>
        <taxon>Pseudomonadales</taxon>
        <taxon>Pseudomonadaceae</taxon>
        <taxon>Pseudomonas</taxon>
    </lineage>
</organism>
<name>HOPW1_PSEYM</name>
<feature type="chain" id="PRO_0000239715" description="Effector protein hopW1-1">
    <location>
        <begin position="1"/>
        <end position="774"/>
    </location>
</feature>
<feature type="region of interest" description="Disordered" evidence="1">
    <location>
        <begin position="1"/>
        <end position="33"/>
    </location>
</feature>
<feature type="region of interest" description="Disordered" evidence="1">
    <location>
        <begin position="301"/>
        <end position="340"/>
    </location>
</feature>
<feature type="compositionally biased region" description="Low complexity" evidence="1">
    <location>
        <begin position="9"/>
        <end position="23"/>
    </location>
</feature>
<feature type="compositionally biased region" description="Polar residues" evidence="1">
    <location>
        <begin position="24"/>
        <end position="33"/>
    </location>
</feature>
<reference key="1">
    <citation type="journal article" date="2002" name="Science">
        <title>A functional screen for the type III (Hrp) secretome of the plant pathogen Pseudomonas syringae.</title>
        <authorList>
            <person name="Guttman D.S."/>
            <person name="Vinatzer B.A."/>
            <person name="Sarkar S.F."/>
            <person name="Ranall M.V."/>
            <person name="Kettler G."/>
            <person name="Greenberg J.T."/>
        </authorList>
    </citation>
    <scope>NUCLEOTIDE SEQUENCE [GENOMIC DNA]</scope>
    <scope>FUNCTION</scope>
    <scope>SUBCELLULAR LOCATION</scope>
    <source>
        <strain>ES4326</strain>
    </source>
</reference>
<reference key="2">
    <citation type="journal article" date="2004" name="J. Bacteriol.">
        <title>Nucleotide sequence and evolution of the five-plasmid complement of the phytopathogen Pseudomonas syringae pv. maculicola ES4326.</title>
        <authorList>
            <person name="Stavrinides J."/>
            <person name="Guttman D.S."/>
        </authorList>
    </citation>
    <scope>NUCLEOTIDE SEQUENCE [GENOMIC DNA]</scope>
    <source>
        <strain>ES4326</strain>
        <plasmid>pPMA4326B</plasmid>
    </source>
</reference>
<reference key="3">
    <citation type="journal article" date="2008" name="Plant J.">
        <title>Arabidopsis proteins important for modulating defense responses to Pseudomonas syringae that secrete HopW1-1.</title>
        <authorList>
            <person name="Lee M.W."/>
            <person name="Jelenska J."/>
            <person name="Greenberg J.T."/>
        </authorList>
    </citation>
    <scope>INTERACTION WITH ARABIDOPSIS WIN1; WIN2 AND WIN3</scope>
</reference>
<geneLocation type="plasmid">
    <name>pPMA4326B</name>
</geneLocation>
<dbReference type="EMBL" id="AF458040">
    <property type="protein sequence ID" value="AAL84239.1"/>
    <property type="molecule type" value="Genomic_DNA"/>
</dbReference>
<dbReference type="EMBL" id="AY603980">
    <property type="protein sequence ID" value="AAT35179.1"/>
    <property type="molecule type" value="Genomic_DNA"/>
</dbReference>
<dbReference type="RefSeq" id="WP_011178595.1">
    <property type="nucleotide sequence ID" value="NZ_LGLD01000064.1"/>
</dbReference>
<dbReference type="RefSeq" id="YP_025680.1">
    <property type="nucleotide sequence ID" value="NC_005919.1"/>
</dbReference>
<dbReference type="SMR" id="Q8RP17"/>
<dbReference type="GO" id="GO:0005576">
    <property type="term" value="C:extracellular region"/>
    <property type="evidence" value="ECO:0007669"/>
    <property type="project" value="UniProtKB-SubCell"/>
</dbReference>
<dbReference type="GO" id="GO:0051701">
    <property type="term" value="P:biological process involved in interaction with host"/>
    <property type="evidence" value="ECO:0000314"/>
    <property type="project" value="UniProtKB"/>
</dbReference>
<dbReference type="GO" id="GO:0052040">
    <property type="term" value="P:symbiont-mediated perturbation of host programmed cell death"/>
    <property type="evidence" value="ECO:0007669"/>
    <property type="project" value="UniProtKB-KW"/>
</dbReference>
<dbReference type="InterPro" id="IPR029378">
    <property type="entry name" value="T3SS_HopW1-1/HolPsyAE"/>
</dbReference>
<dbReference type="Pfam" id="PF15457">
    <property type="entry name" value="HopW1-1"/>
    <property type="match status" value="1"/>
</dbReference>
<keyword id="KW-0928">Hypersensitive response elicitation</keyword>
<keyword id="KW-0614">Plasmid</keyword>
<keyword id="KW-0964">Secreted</keyword>
<accession>Q8RP17</accession>
<protein>
    <recommendedName>
        <fullName>Effector protein hopW1-1</fullName>
    </recommendedName>
    <alternativeName>
        <fullName>Type III effector hopPmaA</fullName>
    </alternativeName>
</protein>
<gene>
    <name type="primary">hopW1-1</name>
    <name type="synonym">hopPmaA</name>
    <name type="ORF">PMA4326B12</name>
</gene>
<evidence type="ECO:0000256" key="1">
    <source>
        <dbReference type="SAM" id="MobiDB-lite"/>
    </source>
</evidence>
<evidence type="ECO:0000269" key="2">
    <source>
    </source>
</evidence>
<evidence type="ECO:0000269" key="3">
    <source>
    </source>
</evidence>
<evidence type="ECO:0000305" key="4"/>